<sequence>MEISWGRALWRNFLGQSPDWYKLALIIFLIVNPLIFLISPFVAGWLLVAEFIFTLAMALKCYPLLPGGLLAIEAVFIGMTSAEHVREEVAANLEVLLLLMFMVAGIYFMKQLLLFIFTRLLLSIRSKMLLSLSFCVAAAFLSAFLDALTVVAVVISVAVGFYGIYHRVASSRTEDTDLQDDSHIDKHYKVVLEQFRGFLRSLMMHAGVGTALGGVMTMVGEPQNLIIAKAAGWHFGDFFLRMSPVTVPVLICGLLTCLLVEKLRWFGYGETLPEKVREVLQQFDDQSRHQRTRQDKIRLIVQAIIGVWLVTALALHLAEVGLIGLSVIILATSLTGVTDEHAIGKAFTESLPFTALLTVFFSVVAVIIDQQLFSPIIQFVLQASEHAQLSLFYIFNGLLSSISDNVFVGTIYINEAKAAMESGAITLKQYELLAVAINTGTNLPSVATPNGQAAFLFLLTSALAPLIRLSYGRMVWMALPYTLVLTLVGLLCVEFTLAPVTEWFMQMGWIATL</sequence>
<feature type="chain" id="PRO_1000191535" description="Na(+)/H(+) antiporter NhaB">
    <location>
        <begin position="1"/>
        <end position="513"/>
    </location>
</feature>
<feature type="transmembrane region" description="Helical" evidence="1">
    <location>
        <begin position="23"/>
        <end position="43"/>
    </location>
</feature>
<feature type="transmembrane region" description="Helical" evidence="1">
    <location>
        <begin position="52"/>
        <end position="72"/>
    </location>
</feature>
<feature type="transmembrane region" description="Helical" evidence="1">
    <location>
        <begin position="97"/>
        <end position="117"/>
    </location>
</feature>
<feature type="transmembrane region" description="Helical" evidence="1">
    <location>
        <begin position="120"/>
        <end position="140"/>
    </location>
</feature>
<feature type="transmembrane region" description="Helical" evidence="1">
    <location>
        <begin position="144"/>
        <end position="164"/>
    </location>
</feature>
<feature type="transmembrane region" description="Helical" evidence="1">
    <location>
        <begin position="202"/>
        <end position="222"/>
    </location>
</feature>
<feature type="transmembrane region" description="Helical" evidence="1">
    <location>
        <begin position="238"/>
        <end position="258"/>
    </location>
</feature>
<feature type="transmembrane region" description="Helical" evidence="1">
    <location>
        <begin position="303"/>
        <end position="323"/>
    </location>
</feature>
<feature type="transmembrane region" description="Helical" evidence="1">
    <location>
        <begin position="348"/>
        <end position="368"/>
    </location>
</feature>
<feature type="transmembrane region" description="Helical" evidence="1">
    <location>
        <begin position="391"/>
        <end position="411"/>
    </location>
</feature>
<feature type="transmembrane region" description="Helical" evidence="1">
    <location>
        <begin position="447"/>
        <end position="467"/>
    </location>
</feature>
<feature type="transmembrane region" description="Helical" evidence="1">
    <location>
        <begin position="475"/>
        <end position="495"/>
    </location>
</feature>
<dbReference type="EMBL" id="CP001164">
    <property type="protein sequence ID" value="ACI39249.1"/>
    <property type="molecule type" value="Genomic_DNA"/>
</dbReference>
<dbReference type="RefSeq" id="WP_000406391.1">
    <property type="nucleotide sequence ID" value="NC_011353.1"/>
</dbReference>
<dbReference type="SMR" id="B5YXL0"/>
<dbReference type="GeneID" id="75203299"/>
<dbReference type="KEGG" id="ecf:ECH74115_1673"/>
<dbReference type="HOGENOM" id="CLU_041110_0_0_6"/>
<dbReference type="GO" id="GO:0005886">
    <property type="term" value="C:plasma membrane"/>
    <property type="evidence" value="ECO:0007669"/>
    <property type="project" value="UniProtKB-SubCell"/>
</dbReference>
<dbReference type="GO" id="GO:0015385">
    <property type="term" value="F:sodium:proton antiporter activity"/>
    <property type="evidence" value="ECO:0007669"/>
    <property type="project" value="InterPro"/>
</dbReference>
<dbReference type="HAMAP" id="MF_01599">
    <property type="entry name" value="NhaB"/>
    <property type="match status" value="1"/>
</dbReference>
<dbReference type="InterPro" id="IPR004671">
    <property type="entry name" value="Na+/H+_antiporter_NhaB"/>
</dbReference>
<dbReference type="NCBIfam" id="TIGR00774">
    <property type="entry name" value="NhaB"/>
    <property type="match status" value="1"/>
</dbReference>
<dbReference type="NCBIfam" id="NF007093">
    <property type="entry name" value="PRK09547.1"/>
    <property type="match status" value="1"/>
</dbReference>
<dbReference type="PANTHER" id="PTHR43302:SF1">
    <property type="entry name" value="NA(+)_H(+) ANTIPORTER NHAB"/>
    <property type="match status" value="1"/>
</dbReference>
<dbReference type="PANTHER" id="PTHR43302">
    <property type="entry name" value="TRANSPORTER ARSB-RELATED"/>
    <property type="match status" value="1"/>
</dbReference>
<dbReference type="Pfam" id="PF06450">
    <property type="entry name" value="NhaB"/>
    <property type="match status" value="1"/>
</dbReference>
<comment type="function">
    <text evidence="1">Na(+)/H(+) antiporter that extrudes sodium in exchange for external protons.</text>
</comment>
<comment type="catalytic activity">
    <reaction evidence="1">
        <text>2 Na(+)(in) + 3 H(+)(out) = 2 Na(+)(out) + 3 H(+)(in)</text>
        <dbReference type="Rhea" id="RHEA:29247"/>
        <dbReference type="ChEBI" id="CHEBI:15378"/>
        <dbReference type="ChEBI" id="CHEBI:29101"/>
    </reaction>
    <physiologicalReaction direction="left-to-right" evidence="1">
        <dbReference type="Rhea" id="RHEA:29248"/>
    </physiologicalReaction>
</comment>
<comment type="subcellular location">
    <subcellularLocation>
        <location evidence="1">Cell inner membrane</location>
        <topology evidence="1">Multi-pass membrane protein</topology>
    </subcellularLocation>
</comment>
<comment type="similarity">
    <text evidence="1">Belongs to the NhaB Na(+)/H(+) (TC 2.A.34) antiporter family.</text>
</comment>
<reference key="1">
    <citation type="journal article" date="2011" name="Proc. Natl. Acad. Sci. U.S.A.">
        <title>Genomic anatomy of Escherichia coli O157:H7 outbreaks.</title>
        <authorList>
            <person name="Eppinger M."/>
            <person name="Mammel M.K."/>
            <person name="Leclerc J.E."/>
            <person name="Ravel J."/>
            <person name="Cebula T.A."/>
        </authorList>
    </citation>
    <scope>NUCLEOTIDE SEQUENCE [LARGE SCALE GENOMIC DNA]</scope>
    <source>
        <strain>EC4115 / EHEC</strain>
    </source>
</reference>
<protein>
    <recommendedName>
        <fullName evidence="1">Na(+)/H(+) antiporter NhaB</fullName>
    </recommendedName>
    <alternativeName>
        <fullName evidence="1">Sodium/proton antiporter NhaB</fullName>
    </alternativeName>
</protein>
<accession>B5YXL0</accession>
<name>NHAB_ECO5E</name>
<organism>
    <name type="scientific">Escherichia coli O157:H7 (strain EC4115 / EHEC)</name>
    <dbReference type="NCBI Taxonomy" id="444450"/>
    <lineage>
        <taxon>Bacteria</taxon>
        <taxon>Pseudomonadati</taxon>
        <taxon>Pseudomonadota</taxon>
        <taxon>Gammaproteobacteria</taxon>
        <taxon>Enterobacterales</taxon>
        <taxon>Enterobacteriaceae</taxon>
        <taxon>Escherichia</taxon>
    </lineage>
</organism>
<proteinExistence type="inferred from homology"/>
<gene>
    <name evidence="1" type="primary">nhaB</name>
    <name type="ordered locus">ECH74115_1673</name>
</gene>
<keyword id="KW-0050">Antiport</keyword>
<keyword id="KW-0997">Cell inner membrane</keyword>
<keyword id="KW-1003">Cell membrane</keyword>
<keyword id="KW-0406">Ion transport</keyword>
<keyword id="KW-0472">Membrane</keyword>
<keyword id="KW-0915">Sodium</keyword>
<keyword id="KW-0739">Sodium transport</keyword>
<keyword id="KW-0812">Transmembrane</keyword>
<keyword id="KW-1133">Transmembrane helix</keyword>
<keyword id="KW-0813">Transport</keyword>
<evidence type="ECO:0000255" key="1">
    <source>
        <dbReference type="HAMAP-Rule" id="MF_01599"/>
    </source>
</evidence>